<gene>
    <name evidence="1" type="primary">upp</name>
    <name type="ordered locus">HQ_1029A</name>
</gene>
<reference key="1">
    <citation type="journal article" date="2006" name="BMC Genomics">
        <title>The genome of the square archaeon Haloquadratum walsbyi: life at the limits of water activity.</title>
        <authorList>
            <person name="Bolhuis H."/>
            <person name="Palm P."/>
            <person name="Wende A."/>
            <person name="Falb M."/>
            <person name="Rampp M."/>
            <person name="Rodriguez-Valera F."/>
            <person name="Pfeiffer F."/>
            <person name="Oesterhelt D."/>
        </authorList>
    </citation>
    <scope>NUCLEOTIDE SEQUENCE [LARGE SCALE GENOMIC DNA]</scope>
    <source>
        <strain>DSM 16790 / HBSQ001</strain>
    </source>
</reference>
<evidence type="ECO:0000255" key="1">
    <source>
        <dbReference type="HAMAP-Rule" id="MF_01218"/>
    </source>
</evidence>
<dbReference type="EC" id="2.4.2.9" evidence="1"/>
<dbReference type="EMBL" id="AM180088">
    <property type="protein sequence ID" value="CAJ51159.1"/>
    <property type="molecule type" value="Genomic_DNA"/>
</dbReference>
<dbReference type="RefSeq" id="WP_011570327.1">
    <property type="nucleotide sequence ID" value="NC_008212.1"/>
</dbReference>
<dbReference type="SMR" id="Q18DK8"/>
<dbReference type="STRING" id="362976.HQ_1029A"/>
<dbReference type="GeneID" id="4194894"/>
<dbReference type="KEGG" id="hwa:HQ_1029A"/>
<dbReference type="eggNOG" id="arCOG04128">
    <property type="taxonomic scope" value="Archaea"/>
</dbReference>
<dbReference type="HOGENOM" id="CLU_067096_2_0_2"/>
<dbReference type="UniPathway" id="UPA00574">
    <property type="reaction ID" value="UER00636"/>
</dbReference>
<dbReference type="Proteomes" id="UP000001975">
    <property type="component" value="Chromosome"/>
</dbReference>
<dbReference type="GO" id="GO:0005525">
    <property type="term" value="F:GTP binding"/>
    <property type="evidence" value="ECO:0007669"/>
    <property type="project" value="UniProtKB-KW"/>
</dbReference>
<dbReference type="GO" id="GO:0000287">
    <property type="term" value="F:magnesium ion binding"/>
    <property type="evidence" value="ECO:0007669"/>
    <property type="project" value="UniProtKB-UniRule"/>
</dbReference>
<dbReference type="GO" id="GO:0004845">
    <property type="term" value="F:uracil phosphoribosyltransferase activity"/>
    <property type="evidence" value="ECO:0007669"/>
    <property type="project" value="UniProtKB-UniRule"/>
</dbReference>
<dbReference type="GO" id="GO:0044206">
    <property type="term" value="P:UMP salvage"/>
    <property type="evidence" value="ECO:0007669"/>
    <property type="project" value="UniProtKB-UniRule"/>
</dbReference>
<dbReference type="GO" id="GO:0006223">
    <property type="term" value="P:uracil salvage"/>
    <property type="evidence" value="ECO:0007669"/>
    <property type="project" value="InterPro"/>
</dbReference>
<dbReference type="CDD" id="cd06223">
    <property type="entry name" value="PRTases_typeI"/>
    <property type="match status" value="1"/>
</dbReference>
<dbReference type="Gene3D" id="3.40.50.2020">
    <property type="match status" value="1"/>
</dbReference>
<dbReference type="HAMAP" id="MF_01218_A">
    <property type="entry name" value="Upp_A"/>
    <property type="match status" value="1"/>
</dbReference>
<dbReference type="InterPro" id="IPR000836">
    <property type="entry name" value="PRibTrfase_dom"/>
</dbReference>
<dbReference type="InterPro" id="IPR029057">
    <property type="entry name" value="PRTase-like"/>
</dbReference>
<dbReference type="InterPro" id="IPR034331">
    <property type="entry name" value="Upp_A"/>
</dbReference>
<dbReference type="InterPro" id="IPR005765">
    <property type="entry name" value="Ura_phspho_trans"/>
</dbReference>
<dbReference type="NCBIfam" id="NF001097">
    <property type="entry name" value="PRK00129.1"/>
    <property type="match status" value="1"/>
</dbReference>
<dbReference type="NCBIfam" id="TIGR01091">
    <property type="entry name" value="upp"/>
    <property type="match status" value="1"/>
</dbReference>
<dbReference type="Pfam" id="PF14681">
    <property type="entry name" value="UPRTase"/>
    <property type="match status" value="1"/>
</dbReference>
<dbReference type="SUPFAM" id="SSF53271">
    <property type="entry name" value="PRTase-like"/>
    <property type="match status" value="1"/>
</dbReference>
<name>UPP_HALWD</name>
<proteinExistence type="inferred from homology"/>
<comment type="function">
    <text evidence="1">Catalyzes the conversion of uracil and 5-phospho-alpha-D-ribose 1-diphosphate (PRPP) to UMP and diphosphate.</text>
</comment>
<comment type="catalytic activity">
    <reaction evidence="1">
        <text>UMP + diphosphate = 5-phospho-alpha-D-ribose 1-diphosphate + uracil</text>
        <dbReference type="Rhea" id="RHEA:13017"/>
        <dbReference type="ChEBI" id="CHEBI:17568"/>
        <dbReference type="ChEBI" id="CHEBI:33019"/>
        <dbReference type="ChEBI" id="CHEBI:57865"/>
        <dbReference type="ChEBI" id="CHEBI:58017"/>
        <dbReference type="EC" id="2.4.2.9"/>
    </reaction>
</comment>
<comment type="cofactor">
    <cofactor evidence="1">
        <name>Mg(2+)</name>
        <dbReference type="ChEBI" id="CHEBI:18420"/>
    </cofactor>
    <text evidence="1">Binds 1 Mg(2+) ion per subunit. The magnesium is bound as Mg-PRPP.</text>
</comment>
<comment type="activity regulation">
    <text evidence="1">Allosterically activated by GTP.</text>
</comment>
<comment type="pathway">
    <text evidence="1">Pyrimidine metabolism; UMP biosynthesis via salvage pathway; UMP from uracil: step 1/1.</text>
</comment>
<comment type="similarity">
    <text evidence="1">Belongs to the UPRTase family.</text>
</comment>
<feature type="chain" id="PRO_1000053726" description="Uracil phosphoribosyltransferase">
    <location>
        <begin position="1"/>
        <end position="226"/>
    </location>
</feature>
<feature type="binding site" evidence="1">
    <location>
        <begin position="36"/>
        <end position="40"/>
    </location>
    <ligand>
        <name>GTP</name>
        <dbReference type="ChEBI" id="CHEBI:37565"/>
    </ligand>
</feature>
<feature type="binding site" evidence="1">
    <location>
        <position position="86"/>
    </location>
    <ligand>
        <name>5-phospho-alpha-D-ribose 1-diphosphate</name>
        <dbReference type="ChEBI" id="CHEBI:58017"/>
    </ligand>
</feature>
<feature type="binding site" evidence="1">
    <location>
        <position position="111"/>
    </location>
    <ligand>
        <name>5-phospho-alpha-D-ribose 1-diphosphate</name>
        <dbReference type="ChEBI" id="CHEBI:58017"/>
    </ligand>
</feature>
<feature type="binding site" evidence="1">
    <location>
        <begin position="145"/>
        <end position="153"/>
    </location>
    <ligand>
        <name>5-phospho-alpha-D-ribose 1-diphosphate</name>
        <dbReference type="ChEBI" id="CHEBI:58017"/>
    </ligand>
</feature>
<feature type="binding site" evidence="1">
    <location>
        <position position="211"/>
    </location>
    <ligand>
        <name>uracil</name>
        <dbReference type="ChEBI" id="CHEBI:17568"/>
    </ligand>
</feature>
<feature type="binding site" evidence="1">
    <location>
        <begin position="216"/>
        <end position="218"/>
    </location>
    <ligand>
        <name>uracil</name>
        <dbReference type="ChEBI" id="CHEBI:17568"/>
    </ligand>
</feature>
<feature type="binding site" evidence="1">
    <location>
        <position position="217"/>
    </location>
    <ligand>
        <name>5-phospho-alpha-D-ribose 1-diphosphate</name>
        <dbReference type="ChEBI" id="CHEBI:58017"/>
    </ligand>
</feature>
<sequence length="226" mass="24225">MPIEDRDNAYLITHALAKDTLSQLRDIETEQVAFRKGLVKLGRICGYEIIDGAMETEYAHVQTPLTETTGEQVSGLDNIVIVNVLRAATPFVEGLLKAFPRAKQGVISAGRDEAAGMNQDGMFPITIDYVKLPEITANDTVVVADPMLATGSTMCAVLDHVNDAAKSKPKNLFVLSAVSAPEGLLHVGSEFSSADLLTVAIDDYLDDEGYIVPGLGDAGDRAFRTV</sequence>
<accession>Q18DK8</accession>
<keyword id="KW-0021">Allosteric enzyme</keyword>
<keyword id="KW-0328">Glycosyltransferase</keyword>
<keyword id="KW-0342">GTP-binding</keyword>
<keyword id="KW-0460">Magnesium</keyword>
<keyword id="KW-0547">Nucleotide-binding</keyword>
<keyword id="KW-1185">Reference proteome</keyword>
<keyword id="KW-0808">Transferase</keyword>
<organism>
    <name type="scientific">Haloquadratum walsbyi (strain DSM 16790 / HBSQ001)</name>
    <dbReference type="NCBI Taxonomy" id="362976"/>
    <lineage>
        <taxon>Archaea</taxon>
        <taxon>Methanobacteriati</taxon>
        <taxon>Methanobacteriota</taxon>
        <taxon>Stenosarchaea group</taxon>
        <taxon>Halobacteria</taxon>
        <taxon>Halobacteriales</taxon>
        <taxon>Haloferacaceae</taxon>
        <taxon>Haloquadratum</taxon>
    </lineage>
</organism>
<protein>
    <recommendedName>
        <fullName evidence="1">Uracil phosphoribosyltransferase</fullName>
        <ecNumber evidence="1">2.4.2.9</ecNumber>
    </recommendedName>
    <alternativeName>
        <fullName evidence="1">UMP pyrophosphorylase</fullName>
    </alternativeName>
    <alternativeName>
        <fullName evidence="1">UPRTase</fullName>
    </alternativeName>
</protein>